<feature type="chain" id="PRO_0000108800" description="Phospho-N-acetylmuramoyl-pentapeptide-transferase">
    <location>
        <begin position="1"/>
        <end position="389"/>
    </location>
</feature>
<feature type="transmembrane region" description="Helical" evidence="1">
    <location>
        <begin position="25"/>
        <end position="45"/>
    </location>
</feature>
<feature type="transmembrane region" description="Helical" evidence="1">
    <location>
        <begin position="73"/>
        <end position="93"/>
    </location>
</feature>
<feature type="transmembrane region" description="Helical" evidence="1">
    <location>
        <begin position="97"/>
        <end position="117"/>
    </location>
</feature>
<feature type="transmembrane region" description="Helical" evidence="1">
    <location>
        <begin position="135"/>
        <end position="155"/>
    </location>
</feature>
<feature type="transmembrane region" description="Helical" evidence="1">
    <location>
        <begin position="190"/>
        <end position="210"/>
    </location>
</feature>
<feature type="transmembrane region" description="Helical" evidence="1">
    <location>
        <begin position="222"/>
        <end position="242"/>
    </location>
</feature>
<feature type="transmembrane region" description="Helical" evidence="1">
    <location>
        <begin position="258"/>
        <end position="278"/>
    </location>
</feature>
<feature type="transmembrane region" description="Helical" evidence="1">
    <location>
        <begin position="286"/>
        <end position="306"/>
    </location>
</feature>
<feature type="transmembrane region" description="Helical" evidence="1">
    <location>
        <begin position="311"/>
        <end position="331"/>
    </location>
</feature>
<feature type="transmembrane region" description="Helical" evidence="1">
    <location>
        <begin position="366"/>
        <end position="386"/>
    </location>
</feature>
<evidence type="ECO:0000255" key="1">
    <source>
        <dbReference type="HAMAP-Rule" id="MF_00038"/>
    </source>
</evidence>
<sequence>MLLALAQWLQGDASFLRLFTYLTFRAVMATITALVIGLVCGPWVIRKLTQMKVGQAVRKDGPQTHLVKSGTPTMGGVLILIGIAVATLLWGDLTNRFIWIVMLVTFGFGVIGWVDDYRKVVYKDPRGMSSREKYFWQSVIGLFAAVYLAFSVSEANNVRVFDLFMAWVRSGLSMGLPARADLMLPFLKSISYPLGVWGFIALTYFVIVGASNAVNLTDGLDGLVIMPVVLVGASLGVFAYVMGSAVYSKYLLFPHIPGAGELLIFCSAMGGAGLAFLWYNTHPAQVFMGDVGALALGGALGTVAVIVRQEIVLFIMGGIFVAETLSVMLQVTWFKYTKKRYGEGRRIFKMAPLHHHFELSGWKETQVVVRFWIITLMLCLFGLSTLKLR</sequence>
<proteinExistence type="inferred from homology"/>
<gene>
    <name evidence="1" type="primary">mraY</name>
    <name type="ordered locus">BPSL3028</name>
</gene>
<keyword id="KW-0131">Cell cycle</keyword>
<keyword id="KW-0132">Cell division</keyword>
<keyword id="KW-0997">Cell inner membrane</keyword>
<keyword id="KW-1003">Cell membrane</keyword>
<keyword id="KW-0133">Cell shape</keyword>
<keyword id="KW-0961">Cell wall biogenesis/degradation</keyword>
<keyword id="KW-0460">Magnesium</keyword>
<keyword id="KW-0472">Membrane</keyword>
<keyword id="KW-0479">Metal-binding</keyword>
<keyword id="KW-0573">Peptidoglycan synthesis</keyword>
<keyword id="KW-1185">Reference proteome</keyword>
<keyword id="KW-0808">Transferase</keyword>
<keyword id="KW-0812">Transmembrane</keyword>
<keyword id="KW-1133">Transmembrane helix</keyword>
<reference key="1">
    <citation type="journal article" date="2004" name="Proc. Natl. Acad. Sci. U.S.A.">
        <title>Genomic plasticity of the causative agent of melioidosis, Burkholderia pseudomallei.</title>
        <authorList>
            <person name="Holden M.T.G."/>
            <person name="Titball R.W."/>
            <person name="Peacock S.J."/>
            <person name="Cerdeno-Tarraga A.-M."/>
            <person name="Atkins T."/>
            <person name="Crossman L.C."/>
            <person name="Pitt T."/>
            <person name="Churcher C."/>
            <person name="Mungall K.L."/>
            <person name="Bentley S.D."/>
            <person name="Sebaihia M."/>
            <person name="Thomson N.R."/>
            <person name="Bason N."/>
            <person name="Beacham I.R."/>
            <person name="Brooks K."/>
            <person name="Brown K.A."/>
            <person name="Brown N.F."/>
            <person name="Challis G.L."/>
            <person name="Cherevach I."/>
            <person name="Chillingworth T."/>
            <person name="Cronin A."/>
            <person name="Crossett B."/>
            <person name="Davis P."/>
            <person name="DeShazer D."/>
            <person name="Feltwell T."/>
            <person name="Fraser A."/>
            <person name="Hance Z."/>
            <person name="Hauser H."/>
            <person name="Holroyd S."/>
            <person name="Jagels K."/>
            <person name="Keith K.E."/>
            <person name="Maddison M."/>
            <person name="Moule S."/>
            <person name="Price C."/>
            <person name="Quail M.A."/>
            <person name="Rabbinowitsch E."/>
            <person name="Rutherford K."/>
            <person name="Sanders M."/>
            <person name="Simmonds M."/>
            <person name="Songsivilai S."/>
            <person name="Stevens K."/>
            <person name="Tumapa S."/>
            <person name="Vesaratchavest M."/>
            <person name="Whitehead S."/>
            <person name="Yeats C."/>
            <person name="Barrell B.G."/>
            <person name="Oyston P.C.F."/>
            <person name="Parkhill J."/>
        </authorList>
    </citation>
    <scope>NUCLEOTIDE SEQUENCE [LARGE SCALE GENOMIC DNA]</scope>
    <source>
        <strain>K96243</strain>
    </source>
</reference>
<name>MRAY_BURPS</name>
<comment type="function">
    <text evidence="1">Catalyzes the initial step of the lipid cycle reactions in the biosynthesis of the cell wall peptidoglycan: transfers peptidoglycan precursor phospho-MurNAc-pentapeptide from UDP-MurNAc-pentapeptide onto the lipid carrier undecaprenyl phosphate, yielding undecaprenyl-pyrophosphoryl-MurNAc-pentapeptide, known as lipid I.</text>
</comment>
<comment type="catalytic activity">
    <reaction evidence="1">
        <text>UDP-N-acetyl-alpha-D-muramoyl-L-alanyl-gamma-D-glutamyl-meso-2,6-diaminopimeloyl-D-alanyl-D-alanine + di-trans,octa-cis-undecaprenyl phosphate = di-trans,octa-cis-undecaprenyl diphospho-N-acetyl-alpha-D-muramoyl-L-alanyl-D-glutamyl-meso-2,6-diaminopimeloyl-D-alanyl-D-alanine + UMP</text>
        <dbReference type="Rhea" id="RHEA:28386"/>
        <dbReference type="ChEBI" id="CHEBI:57865"/>
        <dbReference type="ChEBI" id="CHEBI:60392"/>
        <dbReference type="ChEBI" id="CHEBI:61386"/>
        <dbReference type="ChEBI" id="CHEBI:61387"/>
        <dbReference type="EC" id="2.7.8.13"/>
    </reaction>
</comment>
<comment type="cofactor">
    <cofactor evidence="1">
        <name>Mg(2+)</name>
        <dbReference type="ChEBI" id="CHEBI:18420"/>
    </cofactor>
</comment>
<comment type="pathway">
    <text evidence="1">Cell wall biogenesis; peptidoglycan biosynthesis.</text>
</comment>
<comment type="subcellular location">
    <subcellularLocation>
        <location evidence="1">Cell inner membrane</location>
        <topology evidence="1">Multi-pass membrane protein</topology>
    </subcellularLocation>
</comment>
<comment type="similarity">
    <text evidence="1">Belongs to the glycosyltransferase 4 family. MraY subfamily.</text>
</comment>
<accession>Q63QJ4</accession>
<organism>
    <name type="scientific">Burkholderia pseudomallei (strain K96243)</name>
    <dbReference type="NCBI Taxonomy" id="272560"/>
    <lineage>
        <taxon>Bacteria</taxon>
        <taxon>Pseudomonadati</taxon>
        <taxon>Pseudomonadota</taxon>
        <taxon>Betaproteobacteria</taxon>
        <taxon>Burkholderiales</taxon>
        <taxon>Burkholderiaceae</taxon>
        <taxon>Burkholderia</taxon>
        <taxon>pseudomallei group</taxon>
    </lineage>
</organism>
<protein>
    <recommendedName>
        <fullName evidence="1">Phospho-N-acetylmuramoyl-pentapeptide-transferase</fullName>
        <ecNumber evidence="1">2.7.8.13</ecNumber>
    </recommendedName>
    <alternativeName>
        <fullName evidence="1">UDP-MurNAc-pentapeptide phosphotransferase</fullName>
    </alternativeName>
</protein>
<dbReference type="EC" id="2.7.8.13" evidence="1"/>
<dbReference type="EMBL" id="BX571965">
    <property type="protein sequence ID" value="CAH37040.1"/>
    <property type="molecule type" value="Genomic_DNA"/>
</dbReference>
<dbReference type="RefSeq" id="WP_004194370.1">
    <property type="nucleotide sequence ID" value="NZ_CP009538.1"/>
</dbReference>
<dbReference type="RefSeq" id="YP_109624.1">
    <property type="nucleotide sequence ID" value="NC_006350.1"/>
</dbReference>
<dbReference type="SMR" id="Q63QJ4"/>
<dbReference type="STRING" id="272560.BPSL3028"/>
<dbReference type="GeneID" id="92980246"/>
<dbReference type="KEGG" id="bps:BPSL3028"/>
<dbReference type="PATRIC" id="fig|272560.51.peg.2238"/>
<dbReference type="eggNOG" id="COG0472">
    <property type="taxonomic scope" value="Bacteria"/>
</dbReference>
<dbReference type="UniPathway" id="UPA00219"/>
<dbReference type="Proteomes" id="UP000000605">
    <property type="component" value="Chromosome 1"/>
</dbReference>
<dbReference type="GO" id="GO:0005886">
    <property type="term" value="C:plasma membrane"/>
    <property type="evidence" value="ECO:0007669"/>
    <property type="project" value="UniProtKB-SubCell"/>
</dbReference>
<dbReference type="GO" id="GO:0046872">
    <property type="term" value="F:metal ion binding"/>
    <property type="evidence" value="ECO:0007669"/>
    <property type="project" value="UniProtKB-KW"/>
</dbReference>
<dbReference type="GO" id="GO:0008963">
    <property type="term" value="F:phospho-N-acetylmuramoyl-pentapeptide-transferase activity"/>
    <property type="evidence" value="ECO:0007669"/>
    <property type="project" value="UniProtKB-UniRule"/>
</dbReference>
<dbReference type="GO" id="GO:0051992">
    <property type="term" value="F:UDP-N-acetylmuramoyl-L-alanyl-D-glutamyl-meso-2,6-diaminopimelyl-D-alanyl-D-alanine:undecaprenyl-phosphate transferase activity"/>
    <property type="evidence" value="ECO:0007669"/>
    <property type="project" value="RHEA"/>
</dbReference>
<dbReference type="GO" id="GO:0051301">
    <property type="term" value="P:cell division"/>
    <property type="evidence" value="ECO:0007669"/>
    <property type="project" value="UniProtKB-KW"/>
</dbReference>
<dbReference type="GO" id="GO:0071555">
    <property type="term" value="P:cell wall organization"/>
    <property type="evidence" value="ECO:0007669"/>
    <property type="project" value="UniProtKB-KW"/>
</dbReference>
<dbReference type="GO" id="GO:0009252">
    <property type="term" value="P:peptidoglycan biosynthetic process"/>
    <property type="evidence" value="ECO:0007669"/>
    <property type="project" value="UniProtKB-UniRule"/>
</dbReference>
<dbReference type="GO" id="GO:0008360">
    <property type="term" value="P:regulation of cell shape"/>
    <property type="evidence" value="ECO:0007669"/>
    <property type="project" value="UniProtKB-KW"/>
</dbReference>
<dbReference type="CDD" id="cd06852">
    <property type="entry name" value="GT_MraY"/>
    <property type="match status" value="1"/>
</dbReference>
<dbReference type="HAMAP" id="MF_00038">
    <property type="entry name" value="MraY"/>
    <property type="match status" value="1"/>
</dbReference>
<dbReference type="InterPro" id="IPR000715">
    <property type="entry name" value="Glycosyl_transferase_4"/>
</dbReference>
<dbReference type="InterPro" id="IPR003524">
    <property type="entry name" value="PNAcMuramoyl-5peptid_Trfase"/>
</dbReference>
<dbReference type="InterPro" id="IPR018480">
    <property type="entry name" value="PNAcMuramoyl-5peptid_Trfase_CS"/>
</dbReference>
<dbReference type="NCBIfam" id="TIGR00445">
    <property type="entry name" value="mraY"/>
    <property type="match status" value="1"/>
</dbReference>
<dbReference type="PANTHER" id="PTHR22926">
    <property type="entry name" value="PHOSPHO-N-ACETYLMURAMOYL-PENTAPEPTIDE-TRANSFERASE"/>
    <property type="match status" value="1"/>
</dbReference>
<dbReference type="PANTHER" id="PTHR22926:SF5">
    <property type="entry name" value="PHOSPHO-N-ACETYLMURAMOYL-PENTAPEPTIDE-TRANSFERASE HOMOLOG"/>
    <property type="match status" value="1"/>
</dbReference>
<dbReference type="Pfam" id="PF00953">
    <property type="entry name" value="Glycos_transf_4"/>
    <property type="match status" value="1"/>
</dbReference>
<dbReference type="Pfam" id="PF10555">
    <property type="entry name" value="MraY_sig1"/>
    <property type="match status" value="1"/>
</dbReference>
<dbReference type="PROSITE" id="PS01347">
    <property type="entry name" value="MRAY_1"/>
    <property type="match status" value="1"/>
</dbReference>
<dbReference type="PROSITE" id="PS01348">
    <property type="entry name" value="MRAY_2"/>
    <property type="match status" value="1"/>
</dbReference>